<reference key="1">
    <citation type="journal article" date="2002" name="Proc. Natl. Acad. Sci. U.S.A.">
        <title>The genome sequence of the facultative intracellular pathogen Brucella melitensis.</title>
        <authorList>
            <person name="DelVecchio V.G."/>
            <person name="Kapatral V."/>
            <person name="Redkar R.J."/>
            <person name="Patra G."/>
            <person name="Mujer C."/>
            <person name="Los T."/>
            <person name="Ivanova N."/>
            <person name="Anderson I."/>
            <person name="Bhattacharyya A."/>
            <person name="Lykidis A."/>
            <person name="Reznik G."/>
            <person name="Jablonski L."/>
            <person name="Larsen N."/>
            <person name="D'Souza M."/>
            <person name="Bernal A."/>
            <person name="Mazur M."/>
            <person name="Goltsman E."/>
            <person name="Selkov E."/>
            <person name="Elzer P.H."/>
            <person name="Hagius S."/>
            <person name="O'Callaghan D."/>
            <person name="Letesson J.-J."/>
            <person name="Haselkorn R."/>
            <person name="Kyrpides N.C."/>
            <person name="Overbeek R."/>
        </authorList>
    </citation>
    <scope>NUCLEOTIDE SEQUENCE [LARGE SCALE GENOMIC DNA]</scope>
    <source>
        <strain>ATCC 23456 / CCUG 17765 / NCTC 10094 / 16M</strain>
    </source>
</reference>
<dbReference type="EMBL" id="AE008918">
    <property type="protein sequence ID" value="AAL54101.1"/>
    <property type="status" value="ALT_INIT"/>
    <property type="molecule type" value="Genomic_DNA"/>
</dbReference>
<dbReference type="PIR" id="AB3617">
    <property type="entry name" value="AB3617"/>
</dbReference>
<dbReference type="RefSeq" id="WP_004681740.1">
    <property type="nucleotide sequence ID" value="NZ_GG703779.1"/>
</dbReference>
<dbReference type="SMR" id="Q8YBP0"/>
<dbReference type="GeneID" id="29595235"/>
<dbReference type="KEGG" id="bme:BMEII0859"/>
<dbReference type="KEGG" id="bmel:DK63_2389"/>
<dbReference type="PATRIC" id="fig|224914.52.peg.2503"/>
<dbReference type="eggNOG" id="COG0747">
    <property type="taxonomic scope" value="Bacteria"/>
</dbReference>
<dbReference type="Proteomes" id="UP000000419">
    <property type="component" value="Chromosome II"/>
</dbReference>
<dbReference type="GO" id="GO:0043190">
    <property type="term" value="C:ATP-binding cassette (ABC) transporter complex"/>
    <property type="evidence" value="ECO:0007669"/>
    <property type="project" value="InterPro"/>
</dbReference>
<dbReference type="GO" id="GO:0030288">
    <property type="term" value="C:outer membrane-bounded periplasmic space"/>
    <property type="evidence" value="ECO:0007669"/>
    <property type="project" value="UniProtKB-ARBA"/>
</dbReference>
<dbReference type="GO" id="GO:1904680">
    <property type="term" value="F:peptide transmembrane transporter activity"/>
    <property type="evidence" value="ECO:0007669"/>
    <property type="project" value="TreeGrafter"/>
</dbReference>
<dbReference type="GO" id="GO:0015833">
    <property type="term" value="P:peptide transport"/>
    <property type="evidence" value="ECO:0007669"/>
    <property type="project" value="UniProtKB-KW"/>
</dbReference>
<dbReference type="GO" id="GO:0015031">
    <property type="term" value="P:protein transport"/>
    <property type="evidence" value="ECO:0007669"/>
    <property type="project" value="UniProtKB-KW"/>
</dbReference>
<dbReference type="CDD" id="cd00995">
    <property type="entry name" value="PBP2_NikA_DppA_OppA_like"/>
    <property type="match status" value="1"/>
</dbReference>
<dbReference type="Gene3D" id="3.90.76.10">
    <property type="entry name" value="Dipeptide-binding Protein, Domain 1"/>
    <property type="match status" value="1"/>
</dbReference>
<dbReference type="Gene3D" id="3.10.105.10">
    <property type="entry name" value="Dipeptide-binding Protein, Domain 3"/>
    <property type="match status" value="1"/>
</dbReference>
<dbReference type="Gene3D" id="3.40.190.10">
    <property type="entry name" value="Periplasmic binding protein-like II"/>
    <property type="match status" value="1"/>
</dbReference>
<dbReference type="InterPro" id="IPR030678">
    <property type="entry name" value="Peptide/Ni-bd"/>
</dbReference>
<dbReference type="InterPro" id="IPR039424">
    <property type="entry name" value="SBP_5"/>
</dbReference>
<dbReference type="InterPro" id="IPR000914">
    <property type="entry name" value="SBP_5_dom"/>
</dbReference>
<dbReference type="PANTHER" id="PTHR30290">
    <property type="entry name" value="PERIPLASMIC BINDING COMPONENT OF ABC TRANSPORTER"/>
    <property type="match status" value="1"/>
</dbReference>
<dbReference type="Pfam" id="PF00496">
    <property type="entry name" value="SBP_bac_5"/>
    <property type="match status" value="1"/>
</dbReference>
<dbReference type="PIRSF" id="PIRSF002741">
    <property type="entry name" value="MppA"/>
    <property type="match status" value="1"/>
</dbReference>
<dbReference type="SUPFAM" id="SSF53850">
    <property type="entry name" value="Periplasmic binding protein-like II"/>
    <property type="match status" value="1"/>
</dbReference>
<sequence>MRLRNFYSALALSAAVFAGPLYAAAPAMAAGTISGGFDVGPGGFQGNFNPLAATGGFTWLVTYFEPLVIYDDKLENIVGDLAKSFEISPDQLTYTFKLAHAKWHDGEPFTSKDAKFTFDLARNGKTGSVFAARLASIASVETPDEKTVVIKLKEPSPSMLDTLTKVMMLPEHALASIPPEQLAKNAWWSSTPIGTGPFKFNKYVADQYVELTANPDYRGGRPQVDKLINRYFADPAAAIAALRSGEIQFTYVDSNDVSTFSSDSAFRVIEGDSFVVNYVGFNQEVPLWKDLKVRQAFMHAINRDAIIQSLYGGAAKPANCVYVADRLVPKAIDAYAYDPQKARQLLDEAGWDKINGSKPITILTYYNSPLVANVLAAMQAMLAQVGINIVPRTVDTPTYNSIVYKQGGTADEFPLIFAGLQNGPDPSSINIGLNEKQIPPAGSNIMRIRMPAVTKALDAALAETNPAKRDARYQDVCKATNANLPWGTMWVANRYGVASSKLENFIWTPAPAGGPYQAHPEKWSILE</sequence>
<organism>
    <name type="scientific">Brucella melitensis biotype 1 (strain ATCC 23456 / CCUG 17765 / NCTC 10094 / 16M)</name>
    <dbReference type="NCBI Taxonomy" id="224914"/>
    <lineage>
        <taxon>Bacteria</taxon>
        <taxon>Pseudomonadati</taxon>
        <taxon>Pseudomonadota</taxon>
        <taxon>Alphaproteobacteria</taxon>
        <taxon>Hyphomicrobiales</taxon>
        <taxon>Brucellaceae</taxon>
        <taxon>Brucella/Ochrobactrum group</taxon>
        <taxon>Brucella</taxon>
    </lineage>
</organism>
<comment type="function">
    <text evidence="1">Probably part of an ABC transporter complex that could be involved in peptide import.</text>
</comment>
<comment type="subunit">
    <text evidence="3">The complex is composed of two ATP-binding proteins (BMEII0863 and BMEII0864), two transmembrane proteins (BMEII0860 and BMEII0861) and a solute-binding protein (BMEII0859).</text>
</comment>
<comment type="subcellular location">
    <subcellularLocation>
        <location evidence="3">Periplasm</location>
    </subcellularLocation>
</comment>
<comment type="similarity">
    <text evidence="3">Belongs to the bacterial solute-binding protein 5 family.</text>
</comment>
<comment type="sequence caution" evidence="3">
    <conflict type="erroneous initiation">
        <sequence resource="EMBL-CDS" id="AAL54101"/>
    </conflict>
</comment>
<evidence type="ECO:0000250" key="1"/>
<evidence type="ECO:0000255" key="2"/>
<evidence type="ECO:0000305" key="3"/>
<gene>
    <name type="ordered locus">BMEII0859</name>
</gene>
<name>Y3859_BRUME</name>
<feature type="signal peptide" evidence="2">
    <location>
        <begin position="1"/>
        <end position="23"/>
    </location>
</feature>
<feature type="chain" id="PRO_0000328705" description="Putative ABC transporter peptide-binding protein BMEII0859">
    <location>
        <begin position="24"/>
        <end position="527"/>
    </location>
</feature>
<accession>Q8YBP0</accession>
<proteinExistence type="inferred from homology"/>
<keyword id="KW-0571">Peptide transport</keyword>
<keyword id="KW-0574">Periplasm</keyword>
<keyword id="KW-0653">Protein transport</keyword>
<keyword id="KW-0732">Signal</keyword>
<keyword id="KW-0813">Transport</keyword>
<protein>
    <recommendedName>
        <fullName>Putative ABC transporter peptide-binding protein BMEII0859</fullName>
    </recommendedName>
</protein>